<organism>
    <name type="scientific">Rhodospirillum centenum (strain ATCC 51521 / SW)</name>
    <dbReference type="NCBI Taxonomy" id="414684"/>
    <lineage>
        <taxon>Bacteria</taxon>
        <taxon>Pseudomonadati</taxon>
        <taxon>Pseudomonadota</taxon>
        <taxon>Alphaproteobacteria</taxon>
        <taxon>Rhodospirillales</taxon>
        <taxon>Rhodospirillaceae</taxon>
        <taxon>Rhodospirillum</taxon>
    </lineage>
</organism>
<keyword id="KW-0312">Gluconeogenesis</keyword>
<keyword id="KW-0324">Glycolysis</keyword>
<keyword id="KW-0413">Isomerase</keyword>
<keyword id="KW-1185">Reference proteome</keyword>
<comment type="function">
    <text evidence="1">Catalyzes the interconversion of 2-phosphoglycerate and 3-phosphoglycerate.</text>
</comment>
<comment type="catalytic activity">
    <reaction evidence="1">
        <text>(2R)-2-phosphoglycerate = (2R)-3-phosphoglycerate</text>
        <dbReference type="Rhea" id="RHEA:15901"/>
        <dbReference type="ChEBI" id="CHEBI:58272"/>
        <dbReference type="ChEBI" id="CHEBI:58289"/>
        <dbReference type="EC" id="5.4.2.11"/>
    </reaction>
</comment>
<comment type="pathway">
    <text evidence="1">Carbohydrate degradation; glycolysis; pyruvate from D-glyceraldehyde 3-phosphate: step 3/5.</text>
</comment>
<comment type="subunit">
    <text evidence="1">Homodimer.</text>
</comment>
<comment type="similarity">
    <text evidence="1">Belongs to the phosphoglycerate mutase family. BPG-dependent PGAM subfamily.</text>
</comment>
<protein>
    <recommendedName>
        <fullName evidence="1">2,3-bisphosphoglycerate-dependent phosphoglycerate mutase</fullName>
        <shortName evidence="1">BPG-dependent PGAM</shortName>
        <shortName evidence="1">PGAM</shortName>
        <shortName evidence="1">Phosphoglyceromutase</shortName>
        <shortName evidence="1">dPGM</shortName>
        <ecNumber evidence="1">5.4.2.11</ecNumber>
    </recommendedName>
</protein>
<reference key="1">
    <citation type="submission" date="2007-03" db="EMBL/GenBank/DDBJ databases">
        <title>Genome sequence of Rhodospirillum centenum.</title>
        <authorList>
            <person name="Touchman J.W."/>
            <person name="Bauer C."/>
            <person name="Blankenship R.E."/>
        </authorList>
    </citation>
    <scope>NUCLEOTIDE SEQUENCE [LARGE SCALE GENOMIC DNA]</scope>
    <source>
        <strain>ATCC 51521 / SW</strain>
    </source>
</reference>
<proteinExistence type="inferred from homology"/>
<gene>
    <name evidence="1" type="primary">gpmA</name>
    <name type="ordered locus">RC1_3965</name>
</gene>
<accession>B6IYD3</accession>
<sequence>MTKLVLIRHGQSVWNQQDLFTGWTDVELTEQGVAEAKAAGEKLLAAGYDFDACHTSVLKRAIKTLNLVLETMDRLWLPVQKDWRLNERHYGGLQGLNKTQTAAQHGKEQVHIWRRSYDIPPPPLPEGDERLPDGDRRYKGLSKEQLPRTESLKDCVARVLPYWHESIAPQIRAGQRVLISAHGNSLRGLVMYLSGLSEEEITGFEIPTGRPLVYELDDALKPTDRFFL</sequence>
<feature type="chain" id="PRO_1000135969" description="2,3-bisphosphoglycerate-dependent phosphoglycerate mutase">
    <location>
        <begin position="1"/>
        <end position="228"/>
    </location>
</feature>
<feature type="active site" description="Tele-phosphohistidine intermediate" evidence="1">
    <location>
        <position position="9"/>
    </location>
</feature>
<feature type="active site" description="Proton donor/acceptor" evidence="1">
    <location>
        <position position="87"/>
    </location>
</feature>
<feature type="binding site" evidence="1">
    <location>
        <begin position="8"/>
        <end position="15"/>
    </location>
    <ligand>
        <name>substrate</name>
    </ligand>
</feature>
<feature type="binding site" evidence="1">
    <location>
        <begin position="21"/>
        <end position="22"/>
    </location>
    <ligand>
        <name>substrate</name>
    </ligand>
</feature>
<feature type="binding site" evidence="1">
    <location>
        <position position="60"/>
    </location>
    <ligand>
        <name>substrate</name>
    </ligand>
</feature>
<feature type="binding site" evidence="1">
    <location>
        <begin position="87"/>
        <end position="90"/>
    </location>
    <ligand>
        <name>substrate</name>
    </ligand>
</feature>
<feature type="binding site" evidence="1">
    <location>
        <position position="98"/>
    </location>
    <ligand>
        <name>substrate</name>
    </ligand>
</feature>
<feature type="binding site" evidence="1">
    <location>
        <begin position="114"/>
        <end position="115"/>
    </location>
    <ligand>
        <name>substrate</name>
    </ligand>
</feature>
<feature type="binding site" evidence="1">
    <location>
        <begin position="183"/>
        <end position="184"/>
    </location>
    <ligand>
        <name>substrate</name>
    </ligand>
</feature>
<feature type="site" description="Transition state stabilizer" evidence="1">
    <location>
        <position position="182"/>
    </location>
</feature>
<evidence type="ECO:0000255" key="1">
    <source>
        <dbReference type="HAMAP-Rule" id="MF_01039"/>
    </source>
</evidence>
<dbReference type="EC" id="5.4.2.11" evidence="1"/>
<dbReference type="EMBL" id="CP000613">
    <property type="protein sequence ID" value="ACJ01307.1"/>
    <property type="molecule type" value="Genomic_DNA"/>
</dbReference>
<dbReference type="RefSeq" id="WP_012569080.1">
    <property type="nucleotide sequence ID" value="NC_011420.2"/>
</dbReference>
<dbReference type="SMR" id="B6IYD3"/>
<dbReference type="STRING" id="414684.RC1_3965"/>
<dbReference type="KEGG" id="rce:RC1_3965"/>
<dbReference type="eggNOG" id="COG0588">
    <property type="taxonomic scope" value="Bacteria"/>
</dbReference>
<dbReference type="HOGENOM" id="CLU_033323_1_1_5"/>
<dbReference type="OrthoDB" id="9781415at2"/>
<dbReference type="UniPathway" id="UPA00109">
    <property type="reaction ID" value="UER00186"/>
</dbReference>
<dbReference type="Proteomes" id="UP000001591">
    <property type="component" value="Chromosome"/>
</dbReference>
<dbReference type="GO" id="GO:0004619">
    <property type="term" value="F:phosphoglycerate mutase activity"/>
    <property type="evidence" value="ECO:0007669"/>
    <property type="project" value="UniProtKB-EC"/>
</dbReference>
<dbReference type="GO" id="GO:0006094">
    <property type="term" value="P:gluconeogenesis"/>
    <property type="evidence" value="ECO:0007669"/>
    <property type="project" value="UniProtKB-UniRule"/>
</dbReference>
<dbReference type="GO" id="GO:0006096">
    <property type="term" value="P:glycolytic process"/>
    <property type="evidence" value="ECO:0007669"/>
    <property type="project" value="UniProtKB-UniRule"/>
</dbReference>
<dbReference type="CDD" id="cd07067">
    <property type="entry name" value="HP_PGM_like"/>
    <property type="match status" value="1"/>
</dbReference>
<dbReference type="FunFam" id="3.40.50.1240:FF:000003">
    <property type="entry name" value="2,3-bisphosphoglycerate-dependent phosphoglycerate mutase"/>
    <property type="match status" value="1"/>
</dbReference>
<dbReference type="Gene3D" id="3.40.50.1240">
    <property type="entry name" value="Phosphoglycerate mutase-like"/>
    <property type="match status" value="1"/>
</dbReference>
<dbReference type="HAMAP" id="MF_01039">
    <property type="entry name" value="PGAM_GpmA"/>
    <property type="match status" value="1"/>
</dbReference>
<dbReference type="InterPro" id="IPR013078">
    <property type="entry name" value="His_Pase_superF_clade-1"/>
</dbReference>
<dbReference type="InterPro" id="IPR029033">
    <property type="entry name" value="His_PPase_superfam"/>
</dbReference>
<dbReference type="InterPro" id="IPR001345">
    <property type="entry name" value="PG/BPGM_mutase_AS"/>
</dbReference>
<dbReference type="InterPro" id="IPR005952">
    <property type="entry name" value="Phosphogly_mut1"/>
</dbReference>
<dbReference type="NCBIfam" id="TIGR01258">
    <property type="entry name" value="pgm_1"/>
    <property type="match status" value="1"/>
</dbReference>
<dbReference type="NCBIfam" id="NF010713">
    <property type="entry name" value="PRK14115.1"/>
    <property type="match status" value="1"/>
</dbReference>
<dbReference type="PANTHER" id="PTHR11931">
    <property type="entry name" value="PHOSPHOGLYCERATE MUTASE"/>
    <property type="match status" value="1"/>
</dbReference>
<dbReference type="Pfam" id="PF00300">
    <property type="entry name" value="His_Phos_1"/>
    <property type="match status" value="2"/>
</dbReference>
<dbReference type="PIRSF" id="PIRSF000709">
    <property type="entry name" value="6PFK_2-Ptase"/>
    <property type="match status" value="1"/>
</dbReference>
<dbReference type="SMART" id="SM00855">
    <property type="entry name" value="PGAM"/>
    <property type="match status" value="1"/>
</dbReference>
<dbReference type="SUPFAM" id="SSF53254">
    <property type="entry name" value="Phosphoglycerate mutase-like"/>
    <property type="match status" value="1"/>
</dbReference>
<dbReference type="PROSITE" id="PS00175">
    <property type="entry name" value="PG_MUTASE"/>
    <property type="match status" value="1"/>
</dbReference>
<name>GPMA_RHOCS</name>